<dbReference type="EC" id="6.1.1.15" evidence="1"/>
<dbReference type="EMBL" id="CP000038">
    <property type="protein sequence ID" value="AAZ86999.1"/>
    <property type="molecule type" value="Genomic_DNA"/>
</dbReference>
<dbReference type="RefSeq" id="WP_001260712.1">
    <property type="nucleotide sequence ID" value="NC_007384.1"/>
</dbReference>
<dbReference type="SMR" id="Q3Z5G3"/>
<dbReference type="GeneID" id="93777229"/>
<dbReference type="KEGG" id="ssn:SSON_0208"/>
<dbReference type="HOGENOM" id="CLU_016739_0_0_6"/>
<dbReference type="Proteomes" id="UP000002529">
    <property type="component" value="Chromosome"/>
</dbReference>
<dbReference type="GO" id="GO:0005829">
    <property type="term" value="C:cytosol"/>
    <property type="evidence" value="ECO:0007669"/>
    <property type="project" value="TreeGrafter"/>
</dbReference>
<dbReference type="GO" id="GO:0002161">
    <property type="term" value="F:aminoacyl-tRNA deacylase activity"/>
    <property type="evidence" value="ECO:0007669"/>
    <property type="project" value="InterPro"/>
</dbReference>
<dbReference type="GO" id="GO:0005524">
    <property type="term" value="F:ATP binding"/>
    <property type="evidence" value="ECO:0007669"/>
    <property type="project" value="UniProtKB-UniRule"/>
</dbReference>
<dbReference type="GO" id="GO:0004827">
    <property type="term" value="F:proline-tRNA ligase activity"/>
    <property type="evidence" value="ECO:0007669"/>
    <property type="project" value="UniProtKB-UniRule"/>
</dbReference>
<dbReference type="GO" id="GO:0006433">
    <property type="term" value="P:prolyl-tRNA aminoacylation"/>
    <property type="evidence" value="ECO:0007669"/>
    <property type="project" value="UniProtKB-UniRule"/>
</dbReference>
<dbReference type="CDD" id="cd04334">
    <property type="entry name" value="ProRS-INS"/>
    <property type="match status" value="1"/>
</dbReference>
<dbReference type="CDD" id="cd00861">
    <property type="entry name" value="ProRS_anticodon_short"/>
    <property type="match status" value="1"/>
</dbReference>
<dbReference type="CDD" id="cd00779">
    <property type="entry name" value="ProRS_core_prok"/>
    <property type="match status" value="1"/>
</dbReference>
<dbReference type="FunFam" id="3.30.930.10:FF:000012">
    <property type="entry name" value="Proline--tRNA ligase"/>
    <property type="match status" value="1"/>
</dbReference>
<dbReference type="FunFam" id="3.30.930.10:FF:000097">
    <property type="entry name" value="Proline--tRNA ligase"/>
    <property type="match status" value="1"/>
</dbReference>
<dbReference type="FunFam" id="3.40.50.800:FF:000006">
    <property type="entry name" value="Proline--tRNA ligase"/>
    <property type="match status" value="1"/>
</dbReference>
<dbReference type="FunFam" id="3.90.960.10:FF:000001">
    <property type="entry name" value="Proline--tRNA ligase"/>
    <property type="match status" value="1"/>
</dbReference>
<dbReference type="Gene3D" id="3.40.50.800">
    <property type="entry name" value="Anticodon-binding domain"/>
    <property type="match status" value="1"/>
</dbReference>
<dbReference type="Gene3D" id="3.30.930.10">
    <property type="entry name" value="Bira Bifunctional Protein, Domain 2"/>
    <property type="match status" value="2"/>
</dbReference>
<dbReference type="Gene3D" id="3.90.960.10">
    <property type="entry name" value="YbaK/aminoacyl-tRNA synthetase-associated domain"/>
    <property type="match status" value="1"/>
</dbReference>
<dbReference type="HAMAP" id="MF_01569">
    <property type="entry name" value="Pro_tRNA_synth_type1"/>
    <property type="match status" value="1"/>
</dbReference>
<dbReference type="InterPro" id="IPR002314">
    <property type="entry name" value="aa-tRNA-synt_IIb"/>
</dbReference>
<dbReference type="InterPro" id="IPR006195">
    <property type="entry name" value="aa-tRNA-synth_II"/>
</dbReference>
<dbReference type="InterPro" id="IPR045864">
    <property type="entry name" value="aa-tRNA-synth_II/BPL/LPL"/>
</dbReference>
<dbReference type="InterPro" id="IPR004154">
    <property type="entry name" value="Anticodon-bd"/>
</dbReference>
<dbReference type="InterPro" id="IPR036621">
    <property type="entry name" value="Anticodon-bd_dom_sf"/>
</dbReference>
<dbReference type="InterPro" id="IPR002316">
    <property type="entry name" value="Pro-tRNA-ligase_IIa"/>
</dbReference>
<dbReference type="InterPro" id="IPR004500">
    <property type="entry name" value="Pro-tRNA-synth_IIa_bac-type"/>
</dbReference>
<dbReference type="InterPro" id="IPR023717">
    <property type="entry name" value="Pro-tRNA-Synthase_IIa_type1"/>
</dbReference>
<dbReference type="InterPro" id="IPR050062">
    <property type="entry name" value="Pro-tRNA_synthetase"/>
</dbReference>
<dbReference type="InterPro" id="IPR044140">
    <property type="entry name" value="ProRS_anticodon_short"/>
</dbReference>
<dbReference type="InterPro" id="IPR033730">
    <property type="entry name" value="ProRS_core_prok"/>
</dbReference>
<dbReference type="InterPro" id="IPR036754">
    <property type="entry name" value="YbaK/aa-tRNA-synt-asso_dom_sf"/>
</dbReference>
<dbReference type="InterPro" id="IPR007214">
    <property type="entry name" value="YbaK/aa-tRNA-synth-assoc-dom"/>
</dbReference>
<dbReference type="NCBIfam" id="NF006625">
    <property type="entry name" value="PRK09194.1"/>
    <property type="match status" value="1"/>
</dbReference>
<dbReference type="NCBIfam" id="TIGR00409">
    <property type="entry name" value="proS_fam_II"/>
    <property type="match status" value="1"/>
</dbReference>
<dbReference type="PANTHER" id="PTHR42753">
    <property type="entry name" value="MITOCHONDRIAL RIBOSOME PROTEIN L39/PROLYL-TRNA LIGASE FAMILY MEMBER"/>
    <property type="match status" value="1"/>
</dbReference>
<dbReference type="PANTHER" id="PTHR42753:SF2">
    <property type="entry name" value="PROLINE--TRNA LIGASE"/>
    <property type="match status" value="1"/>
</dbReference>
<dbReference type="Pfam" id="PF03129">
    <property type="entry name" value="HGTP_anticodon"/>
    <property type="match status" value="1"/>
</dbReference>
<dbReference type="Pfam" id="PF00587">
    <property type="entry name" value="tRNA-synt_2b"/>
    <property type="match status" value="1"/>
</dbReference>
<dbReference type="Pfam" id="PF04073">
    <property type="entry name" value="tRNA_edit"/>
    <property type="match status" value="1"/>
</dbReference>
<dbReference type="PIRSF" id="PIRSF001535">
    <property type="entry name" value="ProRS_1"/>
    <property type="match status" value="1"/>
</dbReference>
<dbReference type="PRINTS" id="PR01046">
    <property type="entry name" value="TRNASYNTHPRO"/>
</dbReference>
<dbReference type="SUPFAM" id="SSF52954">
    <property type="entry name" value="Class II aaRS ABD-related"/>
    <property type="match status" value="1"/>
</dbReference>
<dbReference type="SUPFAM" id="SSF55681">
    <property type="entry name" value="Class II aaRS and biotin synthetases"/>
    <property type="match status" value="1"/>
</dbReference>
<dbReference type="SUPFAM" id="SSF55826">
    <property type="entry name" value="YbaK/ProRS associated domain"/>
    <property type="match status" value="1"/>
</dbReference>
<dbReference type="PROSITE" id="PS50862">
    <property type="entry name" value="AA_TRNA_LIGASE_II"/>
    <property type="match status" value="1"/>
</dbReference>
<protein>
    <recommendedName>
        <fullName evidence="1">Proline--tRNA ligase</fullName>
        <ecNumber evidence="1">6.1.1.15</ecNumber>
    </recommendedName>
    <alternativeName>
        <fullName evidence="1">Prolyl-tRNA synthetase</fullName>
        <shortName evidence="1">ProRS</shortName>
    </alternativeName>
</protein>
<feature type="chain" id="PRO_0000248766" description="Proline--tRNA ligase">
    <location>
        <begin position="1"/>
        <end position="572"/>
    </location>
</feature>
<organism>
    <name type="scientific">Shigella sonnei (strain Ss046)</name>
    <dbReference type="NCBI Taxonomy" id="300269"/>
    <lineage>
        <taxon>Bacteria</taxon>
        <taxon>Pseudomonadati</taxon>
        <taxon>Pseudomonadota</taxon>
        <taxon>Gammaproteobacteria</taxon>
        <taxon>Enterobacterales</taxon>
        <taxon>Enterobacteriaceae</taxon>
        <taxon>Shigella</taxon>
    </lineage>
</organism>
<sequence>MRTSQYLLSTLKETPADAEVISHQLMLRAGMIRKLASGLYTWLPTGVRVLKKVENIVREEMNNAGAIEVSMPVVQPADLWQESGRWEQYGPELLRFVDRGERPFVLGPTHEEVITDLIRNELSSYKQLPLNFYQIQTKFRDEVRPRFGVMRSREFLMKDAYSFHTSQESLQETYDAMYAAYSKIFSRMGLDFRAVQADTGSIGGSASHEFQVLAQSGEDDVVFSDTSDYAANIELAEAIAPKEPRAAATQEMTLVDTPNAKTIAELVEQFNLPIEKTVKTLLVKAVEGSSFPLVALLVRGDHELNEVKAEKLPQVASPLTFATEEEIRAVVKAGPGSLGPVNMPIPVVIDRTVAAMSDFAAGANIDGKHYFGINWDRDVATPEVADIRNVVAGDPSPDGQGTLLIKRGIEVGHIFQLGTKYSEALKASVQGEDGRNQILTMGCYGIGVTRVVAAAIEQNYDERGIVWPDAIAPFQVAILPMNMHKSFRVQELAEKLYSELRAQGIEVLLDDRKERPGVMFADMELIGIPHTIVLGDRNLDNDDIEYKYRRNGEKQLIKTGDIVEYLVKQIKG</sequence>
<proteinExistence type="inferred from homology"/>
<keyword id="KW-0030">Aminoacyl-tRNA synthetase</keyword>
<keyword id="KW-0067">ATP-binding</keyword>
<keyword id="KW-0963">Cytoplasm</keyword>
<keyword id="KW-0436">Ligase</keyword>
<keyword id="KW-0547">Nucleotide-binding</keyword>
<keyword id="KW-0648">Protein biosynthesis</keyword>
<keyword id="KW-1185">Reference proteome</keyword>
<reference key="1">
    <citation type="journal article" date="2005" name="Nucleic Acids Res.">
        <title>Genome dynamics and diversity of Shigella species, the etiologic agents of bacillary dysentery.</title>
        <authorList>
            <person name="Yang F."/>
            <person name="Yang J."/>
            <person name="Zhang X."/>
            <person name="Chen L."/>
            <person name="Jiang Y."/>
            <person name="Yan Y."/>
            <person name="Tang X."/>
            <person name="Wang J."/>
            <person name="Xiong Z."/>
            <person name="Dong J."/>
            <person name="Xue Y."/>
            <person name="Zhu Y."/>
            <person name="Xu X."/>
            <person name="Sun L."/>
            <person name="Chen S."/>
            <person name="Nie H."/>
            <person name="Peng J."/>
            <person name="Xu J."/>
            <person name="Wang Y."/>
            <person name="Yuan Z."/>
            <person name="Wen Y."/>
            <person name="Yao Z."/>
            <person name="Shen Y."/>
            <person name="Qiang B."/>
            <person name="Hou Y."/>
            <person name="Yu J."/>
            <person name="Jin Q."/>
        </authorList>
    </citation>
    <scope>NUCLEOTIDE SEQUENCE [LARGE SCALE GENOMIC DNA]</scope>
    <source>
        <strain>Ss046</strain>
    </source>
</reference>
<accession>Q3Z5G3</accession>
<gene>
    <name evidence="1" type="primary">proS</name>
    <name type="ordered locus">SSON_0208</name>
</gene>
<evidence type="ECO:0000255" key="1">
    <source>
        <dbReference type="HAMAP-Rule" id="MF_01569"/>
    </source>
</evidence>
<name>SYP_SHISS</name>
<comment type="function">
    <text evidence="1">Catalyzes the attachment of proline to tRNA(Pro) in a two-step reaction: proline is first activated by ATP to form Pro-AMP and then transferred to the acceptor end of tRNA(Pro). As ProRS can inadvertently accommodate and process non-cognate amino acids such as alanine and cysteine, to avoid such errors it has two additional distinct editing activities against alanine. One activity is designated as 'pretransfer' editing and involves the tRNA(Pro)-independent hydrolysis of activated Ala-AMP. The other activity is designated 'posttransfer' editing and involves deacylation of mischarged Ala-tRNA(Pro). The misacylated Cys-tRNA(Pro) is not edited by ProRS.</text>
</comment>
<comment type="catalytic activity">
    <reaction evidence="1">
        <text>tRNA(Pro) + L-proline + ATP = L-prolyl-tRNA(Pro) + AMP + diphosphate</text>
        <dbReference type="Rhea" id="RHEA:14305"/>
        <dbReference type="Rhea" id="RHEA-COMP:9700"/>
        <dbReference type="Rhea" id="RHEA-COMP:9702"/>
        <dbReference type="ChEBI" id="CHEBI:30616"/>
        <dbReference type="ChEBI" id="CHEBI:33019"/>
        <dbReference type="ChEBI" id="CHEBI:60039"/>
        <dbReference type="ChEBI" id="CHEBI:78442"/>
        <dbReference type="ChEBI" id="CHEBI:78532"/>
        <dbReference type="ChEBI" id="CHEBI:456215"/>
        <dbReference type="EC" id="6.1.1.15"/>
    </reaction>
</comment>
<comment type="subunit">
    <text evidence="1">Homodimer.</text>
</comment>
<comment type="subcellular location">
    <subcellularLocation>
        <location evidence="1">Cytoplasm</location>
    </subcellularLocation>
</comment>
<comment type="domain">
    <text evidence="1">Consists of three domains: the N-terminal catalytic domain, the editing domain and the C-terminal anticodon-binding domain.</text>
</comment>
<comment type="similarity">
    <text evidence="1">Belongs to the class-II aminoacyl-tRNA synthetase family. ProS type 1 subfamily.</text>
</comment>